<feature type="signal peptide" evidence="1">
    <location>
        <begin position="1"/>
        <end position="25"/>
    </location>
</feature>
<feature type="chain" id="PRO_0000014848" description="Leucine-rich repeat neuronal protein 1">
    <location>
        <begin position="26"/>
        <end position="716"/>
    </location>
</feature>
<feature type="topological domain" description="Extracellular" evidence="2">
    <location>
        <begin position="26"/>
        <end position="631"/>
    </location>
</feature>
<feature type="transmembrane region" description="Helical" evidence="2">
    <location>
        <begin position="632"/>
        <end position="652"/>
    </location>
</feature>
<feature type="topological domain" description="Cytoplasmic" evidence="2">
    <location>
        <begin position="653"/>
        <end position="716"/>
    </location>
</feature>
<feature type="domain" description="LRRNT">
    <location>
        <begin position="26"/>
        <end position="72"/>
    </location>
</feature>
<feature type="repeat" description="LRR 1">
    <location>
        <begin position="73"/>
        <end position="95"/>
    </location>
</feature>
<feature type="repeat" description="LRR 2">
    <location>
        <begin position="96"/>
        <end position="117"/>
    </location>
</feature>
<feature type="repeat" description="LRR 3">
    <location>
        <begin position="120"/>
        <end position="141"/>
    </location>
</feature>
<feature type="repeat" description="LRR 4">
    <location>
        <begin position="144"/>
        <end position="165"/>
    </location>
</feature>
<feature type="repeat" description="LRR 5">
    <location>
        <begin position="168"/>
        <end position="189"/>
    </location>
</feature>
<feature type="repeat" description="LRR 6">
    <location>
        <begin position="192"/>
        <end position="213"/>
    </location>
</feature>
<feature type="repeat" description="LRR 7">
    <location>
        <begin position="216"/>
        <end position="237"/>
    </location>
</feature>
<feature type="repeat" description="LRR 8">
    <location>
        <begin position="240"/>
        <end position="261"/>
    </location>
</feature>
<feature type="repeat" description="LRR 9">
    <location>
        <begin position="264"/>
        <end position="285"/>
    </location>
</feature>
<feature type="domain" description="LRRCT">
    <location>
        <begin position="371"/>
        <end position="424"/>
    </location>
</feature>
<feature type="domain" description="Ig-like C2-type">
    <location>
        <begin position="424"/>
        <end position="515"/>
    </location>
</feature>
<feature type="domain" description="Fibronectin type-III" evidence="4">
    <location>
        <begin position="525"/>
        <end position="619"/>
    </location>
</feature>
<feature type="region of interest" description="Disordered" evidence="5">
    <location>
        <begin position="692"/>
        <end position="716"/>
    </location>
</feature>
<feature type="compositionally biased region" description="Polar residues" evidence="5">
    <location>
        <begin position="702"/>
        <end position="716"/>
    </location>
</feature>
<feature type="glycosylation site" description="N-linked (GlcNAc...) asparagine" evidence="2">
    <location>
        <position position="69"/>
    </location>
</feature>
<feature type="glycosylation site" description="N-linked (GlcNAc...) asparagine" evidence="2">
    <location>
        <position position="96"/>
    </location>
</feature>
<feature type="glycosylation site" description="N-linked (GlcNAc...) asparagine" evidence="2">
    <location>
        <position position="117"/>
    </location>
</feature>
<feature type="glycosylation site" description="N-linked (GlcNAc...) asparagine" evidence="2">
    <location>
        <position position="385"/>
    </location>
</feature>
<feature type="glycosylation site" description="N-linked (GlcNAc...) asparagine" evidence="2">
    <location>
        <position position="517"/>
    </location>
</feature>
<feature type="disulfide bond" evidence="3">
    <location>
        <begin position="447"/>
        <end position="499"/>
    </location>
</feature>
<organism>
    <name type="scientific">Mus musculus</name>
    <name type="common">Mouse</name>
    <dbReference type="NCBI Taxonomy" id="10090"/>
    <lineage>
        <taxon>Eukaryota</taxon>
        <taxon>Metazoa</taxon>
        <taxon>Chordata</taxon>
        <taxon>Craniata</taxon>
        <taxon>Vertebrata</taxon>
        <taxon>Euteleostomi</taxon>
        <taxon>Mammalia</taxon>
        <taxon>Eutheria</taxon>
        <taxon>Euarchontoglires</taxon>
        <taxon>Glires</taxon>
        <taxon>Rodentia</taxon>
        <taxon>Myomorpha</taxon>
        <taxon>Muroidea</taxon>
        <taxon>Muridae</taxon>
        <taxon>Murinae</taxon>
        <taxon>Mus</taxon>
        <taxon>Mus</taxon>
    </lineage>
</organism>
<proteinExistence type="evidence at transcript level"/>
<gene>
    <name type="primary">Lrrn1</name>
    <name type="synonym">Kiaa1497</name>
</gene>
<comment type="subcellular location">
    <subcellularLocation>
        <location evidence="7">Membrane</location>
        <topology evidence="7">Single-pass type I membrane protein</topology>
    </subcellularLocation>
</comment>
<comment type="tissue specificity">
    <text evidence="6">Expressed in brain.</text>
</comment>
<comment type="sequence caution" evidence="7">
    <conflict type="erroneous initiation">
        <sequence resource="EMBL-CDS" id="BAD32464"/>
    </conflict>
</comment>
<reference key="1">
    <citation type="journal article" date="1996" name="Brain Res. Mol. Brain Res.">
        <title>Molecular cloning of novel leucine-rich repeat proteins and their expression in the developing mouse nervous system.</title>
        <authorList>
            <person name="Taguchi A."/>
            <person name="Wanaka A."/>
            <person name="Mori T."/>
            <person name="Matsumoto K."/>
            <person name="Imai Y."/>
            <person name="Takagi T."/>
            <person name="Tohyama M."/>
        </authorList>
    </citation>
    <scope>NUCLEOTIDE SEQUENCE [MRNA]</scope>
    <scope>TISSUE SPECIFICITY</scope>
    <source>
        <strain>ICR</strain>
        <tissue>Brain</tissue>
    </source>
</reference>
<reference key="2">
    <citation type="journal article" date="2004" name="DNA Res.">
        <title>Prediction of the coding sequences of mouse homologues of KIAA gene: IV. The complete nucleotide sequences of 500 mouse KIAA-homologous cDNAs identified by screening of terminal sequences of cDNA clones randomly sampled from size-fractionated libraries.</title>
        <authorList>
            <person name="Okazaki N."/>
            <person name="Kikuno R."/>
            <person name="Ohara R."/>
            <person name="Inamoto S."/>
            <person name="Koseki H."/>
            <person name="Hiraoka S."/>
            <person name="Saga Y."/>
            <person name="Seino S."/>
            <person name="Nishimura M."/>
            <person name="Kaisho T."/>
            <person name="Hoshino K."/>
            <person name="Kitamura H."/>
            <person name="Nagase T."/>
            <person name="Ohara O."/>
            <person name="Koga H."/>
        </authorList>
    </citation>
    <scope>NUCLEOTIDE SEQUENCE [LARGE SCALE MRNA]</scope>
    <source>
        <tissue>Pancreatic islet</tissue>
    </source>
</reference>
<reference key="3">
    <citation type="journal article" date="2005" name="Science">
        <title>The transcriptional landscape of the mammalian genome.</title>
        <authorList>
            <person name="Carninci P."/>
            <person name="Kasukawa T."/>
            <person name="Katayama S."/>
            <person name="Gough J."/>
            <person name="Frith M.C."/>
            <person name="Maeda N."/>
            <person name="Oyama R."/>
            <person name="Ravasi T."/>
            <person name="Lenhard B."/>
            <person name="Wells C."/>
            <person name="Kodzius R."/>
            <person name="Shimokawa K."/>
            <person name="Bajic V.B."/>
            <person name="Brenner S.E."/>
            <person name="Batalov S."/>
            <person name="Forrest A.R."/>
            <person name="Zavolan M."/>
            <person name="Davis M.J."/>
            <person name="Wilming L.G."/>
            <person name="Aidinis V."/>
            <person name="Allen J.E."/>
            <person name="Ambesi-Impiombato A."/>
            <person name="Apweiler R."/>
            <person name="Aturaliya R.N."/>
            <person name="Bailey T.L."/>
            <person name="Bansal M."/>
            <person name="Baxter L."/>
            <person name="Beisel K.W."/>
            <person name="Bersano T."/>
            <person name="Bono H."/>
            <person name="Chalk A.M."/>
            <person name="Chiu K.P."/>
            <person name="Choudhary V."/>
            <person name="Christoffels A."/>
            <person name="Clutterbuck D.R."/>
            <person name="Crowe M.L."/>
            <person name="Dalla E."/>
            <person name="Dalrymple B.P."/>
            <person name="de Bono B."/>
            <person name="Della Gatta G."/>
            <person name="di Bernardo D."/>
            <person name="Down T."/>
            <person name="Engstrom P."/>
            <person name="Fagiolini M."/>
            <person name="Faulkner G."/>
            <person name="Fletcher C.F."/>
            <person name="Fukushima T."/>
            <person name="Furuno M."/>
            <person name="Futaki S."/>
            <person name="Gariboldi M."/>
            <person name="Georgii-Hemming P."/>
            <person name="Gingeras T.R."/>
            <person name="Gojobori T."/>
            <person name="Green R.E."/>
            <person name="Gustincich S."/>
            <person name="Harbers M."/>
            <person name="Hayashi Y."/>
            <person name="Hensch T.K."/>
            <person name="Hirokawa N."/>
            <person name="Hill D."/>
            <person name="Huminiecki L."/>
            <person name="Iacono M."/>
            <person name="Ikeo K."/>
            <person name="Iwama A."/>
            <person name="Ishikawa T."/>
            <person name="Jakt M."/>
            <person name="Kanapin A."/>
            <person name="Katoh M."/>
            <person name="Kawasawa Y."/>
            <person name="Kelso J."/>
            <person name="Kitamura H."/>
            <person name="Kitano H."/>
            <person name="Kollias G."/>
            <person name="Krishnan S.P."/>
            <person name="Kruger A."/>
            <person name="Kummerfeld S.K."/>
            <person name="Kurochkin I.V."/>
            <person name="Lareau L.F."/>
            <person name="Lazarevic D."/>
            <person name="Lipovich L."/>
            <person name="Liu J."/>
            <person name="Liuni S."/>
            <person name="McWilliam S."/>
            <person name="Madan Babu M."/>
            <person name="Madera M."/>
            <person name="Marchionni L."/>
            <person name="Matsuda H."/>
            <person name="Matsuzawa S."/>
            <person name="Miki H."/>
            <person name="Mignone F."/>
            <person name="Miyake S."/>
            <person name="Morris K."/>
            <person name="Mottagui-Tabar S."/>
            <person name="Mulder N."/>
            <person name="Nakano N."/>
            <person name="Nakauchi H."/>
            <person name="Ng P."/>
            <person name="Nilsson R."/>
            <person name="Nishiguchi S."/>
            <person name="Nishikawa S."/>
            <person name="Nori F."/>
            <person name="Ohara O."/>
            <person name="Okazaki Y."/>
            <person name="Orlando V."/>
            <person name="Pang K.C."/>
            <person name="Pavan W.J."/>
            <person name="Pavesi G."/>
            <person name="Pesole G."/>
            <person name="Petrovsky N."/>
            <person name="Piazza S."/>
            <person name="Reed J."/>
            <person name="Reid J.F."/>
            <person name="Ring B.Z."/>
            <person name="Ringwald M."/>
            <person name="Rost B."/>
            <person name="Ruan Y."/>
            <person name="Salzberg S.L."/>
            <person name="Sandelin A."/>
            <person name="Schneider C."/>
            <person name="Schoenbach C."/>
            <person name="Sekiguchi K."/>
            <person name="Semple C.A."/>
            <person name="Seno S."/>
            <person name="Sessa L."/>
            <person name="Sheng Y."/>
            <person name="Shibata Y."/>
            <person name="Shimada H."/>
            <person name="Shimada K."/>
            <person name="Silva D."/>
            <person name="Sinclair B."/>
            <person name="Sperling S."/>
            <person name="Stupka E."/>
            <person name="Sugiura K."/>
            <person name="Sultana R."/>
            <person name="Takenaka Y."/>
            <person name="Taki K."/>
            <person name="Tammoja K."/>
            <person name="Tan S.L."/>
            <person name="Tang S."/>
            <person name="Taylor M.S."/>
            <person name="Tegner J."/>
            <person name="Teichmann S.A."/>
            <person name="Ueda H.R."/>
            <person name="van Nimwegen E."/>
            <person name="Verardo R."/>
            <person name="Wei C.L."/>
            <person name="Yagi K."/>
            <person name="Yamanishi H."/>
            <person name="Zabarovsky E."/>
            <person name="Zhu S."/>
            <person name="Zimmer A."/>
            <person name="Hide W."/>
            <person name="Bult C."/>
            <person name="Grimmond S.M."/>
            <person name="Teasdale R.D."/>
            <person name="Liu E.T."/>
            <person name="Brusic V."/>
            <person name="Quackenbush J."/>
            <person name="Wahlestedt C."/>
            <person name="Mattick J.S."/>
            <person name="Hume D.A."/>
            <person name="Kai C."/>
            <person name="Sasaki D."/>
            <person name="Tomaru Y."/>
            <person name="Fukuda S."/>
            <person name="Kanamori-Katayama M."/>
            <person name="Suzuki M."/>
            <person name="Aoki J."/>
            <person name="Arakawa T."/>
            <person name="Iida J."/>
            <person name="Imamura K."/>
            <person name="Itoh M."/>
            <person name="Kato T."/>
            <person name="Kawaji H."/>
            <person name="Kawagashira N."/>
            <person name="Kawashima T."/>
            <person name="Kojima M."/>
            <person name="Kondo S."/>
            <person name="Konno H."/>
            <person name="Nakano K."/>
            <person name="Ninomiya N."/>
            <person name="Nishio T."/>
            <person name="Okada M."/>
            <person name="Plessy C."/>
            <person name="Shibata K."/>
            <person name="Shiraki T."/>
            <person name="Suzuki S."/>
            <person name="Tagami M."/>
            <person name="Waki K."/>
            <person name="Watahiki A."/>
            <person name="Okamura-Oho Y."/>
            <person name="Suzuki H."/>
            <person name="Kawai J."/>
            <person name="Hayashizaki Y."/>
        </authorList>
    </citation>
    <scope>NUCLEOTIDE SEQUENCE [LARGE SCALE MRNA]</scope>
    <source>
        <strain>C57BL/6J</strain>
        <tissue>Brain</tissue>
        <tissue>Brain cortex</tissue>
        <tissue>Corpora quadrigemina</tissue>
    </source>
</reference>
<reference key="4">
    <citation type="journal article" date="2004" name="Genome Res.">
        <title>The status, quality, and expansion of the NIH full-length cDNA project: the Mammalian Gene Collection (MGC).</title>
        <authorList>
            <consortium name="The MGC Project Team"/>
        </authorList>
    </citation>
    <scope>NUCLEOTIDE SEQUENCE [LARGE SCALE MRNA]</scope>
    <source>
        <strain>C57BL/6J</strain>
        <strain>FVB/N</strain>
        <tissue>Brain</tissue>
        <tissue>Kidney</tissue>
    </source>
</reference>
<sequence length="716" mass="80548">MARLSTGKAACQVVLGLLITSLTESSILTSECPQLCVCEIRPWFTPQSTYREATTVDCNDLRLTRIPGNLSSDTQVLLLQSNNIAKTVDELQQLFNLTELDFSQNNFTNIKEVGLANLTQLTTLHLEENQISEMTDYCLQDLSNLQELYINHNQISTISANAFSGLKNLLRLHLNSNKLKVIDSRWFDSTPNLEILMIGENPVIGILDMNFRPLSNLRSLVLAGMYLTDVPGNALVGLDSLESLSFYDNKLIKVPQLALQKVPNLKFLDLNKNPIHKIQEGDFKNMLRLKELGINNMGELVSVDRYALDNLPELTKLEATNNPKLSYIHRLAFRSVPALESLMLNNNALNAVYQKTVESLPNLREISIHSNPLRCDCVIHWINSNKTNIRFMEPLSMFCAMPPEYRGQQVKEVLIQDSSEQCLPMISHDTFPNHLNMDIGTTLFLDCRAMAEPEPEIYWVTPIGNKITVETLSDKYKLSSEGTLEIANIQIEDSGRYTCVAQNVQGADTRVATIKVNGTLLDGAQVLKIYVKQTESHSILVSWKVNSNVMTSNLKWSSATMKIDNPHITYTARVPVDVHEYNLTHLQPSTDYEVCLTVSNIHQQTQKSCVNVTTKTAAFALDISDHETSTALAAVMGSMFAVISLASIAIYIAKRFKRKNYHHSLKKYMQKTSSIPLNELYPPLINLWEADSDKDKDGSADTKPTQVDTSRSYYMW</sequence>
<accession>Q61809</accession>
<accession>Q3USY1</accession>
<accession>Q69ZI0</accession>
<name>LRRN1_MOUSE</name>
<protein>
    <recommendedName>
        <fullName>Leucine-rich repeat neuronal protein 1</fullName>
    </recommendedName>
    <alternativeName>
        <fullName>Neuronal leucine-rich repeat protein 1</fullName>
        <shortName>NLRR-1</shortName>
    </alternativeName>
</protein>
<keyword id="KW-1015">Disulfide bond</keyword>
<keyword id="KW-0325">Glycoprotein</keyword>
<keyword id="KW-0393">Immunoglobulin domain</keyword>
<keyword id="KW-0433">Leucine-rich repeat</keyword>
<keyword id="KW-0472">Membrane</keyword>
<keyword id="KW-1185">Reference proteome</keyword>
<keyword id="KW-0677">Repeat</keyword>
<keyword id="KW-0732">Signal</keyword>
<keyword id="KW-0812">Transmembrane</keyword>
<keyword id="KW-1133">Transmembrane helix</keyword>
<evidence type="ECO:0000250" key="1"/>
<evidence type="ECO:0000255" key="2"/>
<evidence type="ECO:0000255" key="3">
    <source>
        <dbReference type="PROSITE-ProRule" id="PRU00114"/>
    </source>
</evidence>
<evidence type="ECO:0000255" key="4">
    <source>
        <dbReference type="PROSITE-ProRule" id="PRU00316"/>
    </source>
</evidence>
<evidence type="ECO:0000256" key="5">
    <source>
        <dbReference type="SAM" id="MobiDB-lite"/>
    </source>
</evidence>
<evidence type="ECO:0000269" key="6">
    <source>
    </source>
</evidence>
<evidence type="ECO:0000305" key="7"/>
<dbReference type="EMBL" id="D45913">
    <property type="protein sequence ID" value="BAA08341.1"/>
    <property type="molecule type" value="mRNA"/>
</dbReference>
<dbReference type="EMBL" id="AK173186">
    <property type="protein sequence ID" value="BAD32464.1"/>
    <property type="status" value="ALT_INIT"/>
    <property type="molecule type" value="mRNA"/>
</dbReference>
<dbReference type="EMBL" id="AK139355">
    <property type="protein sequence ID" value="BAE23973.1"/>
    <property type="molecule type" value="mRNA"/>
</dbReference>
<dbReference type="EMBL" id="AK139965">
    <property type="protein sequence ID" value="BAE24199.1"/>
    <property type="molecule type" value="mRNA"/>
</dbReference>
<dbReference type="EMBL" id="AK160841">
    <property type="protein sequence ID" value="BAE36040.1"/>
    <property type="molecule type" value="mRNA"/>
</dbReference>
<dbReference type="EMBL" id="BC031122">
    <property type="protein sequence ID" value="AAH31122.1"/>
    <property type="molecule type" value="mRNA"/>
</dbReference>
<dbReference type="EMBL" id="BC058701">
    <property type="protein sequence ID" value="AAH58701.1"/>
    <property type="molecule type" value="mRNA"/>
</dbReference>
<dbReference type="CCDS" id="CCDS20399.1"/>
<dbReference type="RefSeq" id="NP_032542.1">
    <property type="nucleotide sequence ID" value="NM_008516.4"/>
</dbReference>
<dbReference type="SMR" id="Q61809"/>
<dbReference type="FunCoup" id="Q61809">
    <property type="interactions" value="245"/>
</dbReference>
<dbReference type="STRING" id="10090.ENSMUSP00000037096"/>
<dbReference type="GlyCosmos" id="Q61809">
    <property type="glycosylation" value="5 sites, No reported glycans"/>
</dbReference>
<dbReference type="GlyGen" id="Q61809">
    <property type="glycosylation" value="7 sites, 4 N-linked glycans (5 sites)"/>
</dbReference>
<dbReference type="iPTMnet" id="Q61809"/>
<dbReference type="PhosphoSitePlus" id="Q61809"/>
<dbReference type="PaxDb" id="10090-ENSMUSP00000037096"/>
<dbReference type="ProteomicsDB" id="290174"/>
<dbReference type="ABCD" id="Q61809">
    <property type="antibodies" value="6 sequenced antibodies"/>
</dbReference>
<dbReference type="Antibodypedia" id="2639">
    <property type="antibodies" value="91 antibodies from 21 providers"/>
</dbReference>
<dbReference type="DNASU" id="16979"/>
<dbReference type="Ensembl" id="ENSMUST00000049285.10">
    <property type="protein sequence ID" value="ENSMUSP00000037096.9"/>
    <property type="gene ID" value="ENSMUSG00000034648.10"/>
</dbReference>
<dbReference type="GeneID" id="16979"/>
<dbReference type="KEGG" id="mmu:16979"/>
<dbReference type="UCSC" id="uc009ddd.2">
    <property type="organism name" value="mouse"/>
</dbReference>
<dbReference type="AGR" id="MGI:106038"/>
<dbReference type="CTD" id="57633"/>
<dbReference type="MGI" id="MGI:106038">
    <property type="gene designation" value="Lrrn1"/>
</dbReference>
<dbReference type="VEuPathDB" id="HostDB:ENSMUSG00000034648"/>
<dbReference type="eggNOG" id="KOG0619">
    <property type="taxonomic scope" value="Eukaryota"/>
</dbReference>
<dbReference type="GeneTree" id="ENSGT00940000157154"/>
<dbReference type="HOGENOM" id="CLU_000288_18_18_1"/>
<dbReference type="InParanoid" id="Q61809"/>
<dbReference type="OMA" id="ANQCLPM"/>
<dbReference type="OrthoDB" id="266138at2759"/>
<dbReference type="PhylomeDB" id="Q61809"/>
<dbReference type="TreeFam" id="TF334360"/>
<dbReference type="BioGRID-ORCS" id="16979">
    <property type="hits" value="1 hit in 75 CRISPR screens"/>
</dbReference>
<dbReference type="ChiTaRS" id="Lrrn1">
    <property type="organism name" value="mouse"/>
</dbReference>
<dbReference type="PRO" id="PR:Q61809"/>
<dbReference type="Proteomes" id="UP000000589">
    <property type="component" value="Chromosome 6"/>
</dbReference>
<dbReference type="RNAct" id="Q61809">
    <property type="molecule type" value="protein"/>
</dbReference>
<dbReference type="Bgee" id="ENSMUSG00000034648">
    <property type="expression patterns" value="Expressed in pontine nuclear group and 230 other cell types or tissues"/>
</dbReference>
<dbReference type="GO" id="GO:0016020">
    <property type="term" value="C:membrane"/>
    <property type="evidence" value="ECO:0007669"/>
    <property type="project" value="UniProtKB-SubCell"/>
</dbReference>
<dbReference type="GO" id="GO:0051965">
    <property type="term" value="P:positive regulation of synapse assembly"/>
    <property type="evidence" value="ECO:0000314"/>
    <property type="project" value="MGI"/>
</dbReference>
<dbReference type="CDD" id="cd00063">
    <property type="entry name" value="FN3"/>
    <property type="match status" value="1"/>
</dbReference>
<dbReference type="FunFam" id="2.60.40.10:FF:000355">
    <property type="entry name" value="Leucine-rich repeat neuronal protein 1"/>
    <property type="match status" value="1"/>
</dbReference>
<dbReference type="FunFam" id="2.60.40.10:FF:000481">
    <property type="entry name" value="Leucine-rich repeat neuronal protein 1"/>
    <property type="match status" value="1"/>
</dbReference>
<dbReference type="FunFam" id="3.80.10.10:FF:000056">
    <property type="entry name" value="Leucine-rich repeat neuronal protein 1"/>
    <property type="match status" value="1"/>
</dbReference>
<dbReference type="FunFam" id="3.80.10.10:FF:000074">
    <property type="entry name" value="Leucine-rich repeat neuronal protein 1"/>
    <property type="match status" value="1"/>
</dbReference>
<dbReference type="FunFam" id="3.80.10.10:FF:000090">
    <property type="entry name" value="Leucine-rich repeat neuronal protein 1"/>
    <property type="match status" value="1"/>
</dbReference>
<dbReference type="Gene3D" id="2.60.40.10">
    <property type="entry name" value="Immunoglobulins"/>
    <property type="match status" value="2"/>
</dbReference>
<dbReference type="Gene3D" id="3.80.10.10">
    <property type="entry name" value="Ribonuclease Inhibitor"/>
    <property type="match status" value="3"/>
</dbReference>
<dbReference type="InterPro" id="IPR000483">
    <property type="entry name" value="Cys-rich_flank_reg_C"/>
</dbReference>
<dbReference type="InterPro" id="IPR050328">
    <property type="entry name" value="Dev_Immune_Receptor"/>
</dbReference>
<dbReference type="InterPro" id="IPR003961">
    <property type="entry name" value="FN3_dom"/>
</dbReference>
<dbReference type="InterPro" id="IPR036116">
    <property type="entry name" value="FN3_sf"/>
</dbReference>
<dbReference type="InterPro" id="IPR007110">
    <property type="entry name" value="Ig-like_dom"/>
</dbReference>
<dbReference type="InterPro" id="IPR036179">
    <property type="entry name" value="Ig-like_dom_sf"/>
</dbReference>
<dbReference type="InterPro" id="IPR013783">
    <property type="entry name" value="Ig-like_fold"/>
</dbReference>
<dbReference type="InterPro" id="IPR013098">
    <property type="entry name" value="Ig_I-set"/>
</dbReference>
<dbReference type="InterPro" id="IPR003599">
    <property type="entry name" value="Ig_sub"/>
</dbReference>
<dbReference type="InterPro" id="IPR003598">
    <property type="entry name" value="Ig_sub2"/>
</dbReference>
<dbReference type="InterPro" id="IPR001611">
    <property type="entry name" value="Leu-rich_rpt"/>
</dbReference>
<dbReference type="InterPro" id="IPR003591">
    <property type="entry name" value="Leu-rich_rpt_typical-subtyp"/>
</dbReference>
<dbReference type="InterPro" id="IPR032675">
    <property type="entry name" value="LRR_dom_sf"/>
</dbReference>
<dbReference type="PANTHER" id="PTHR24373:SF97">
    <property type="entry name" value="LEUCINE-RICH REPEAT NEURONAL PROTEIN 1"/>
    <property type="match status" value="1"/>
</dbReference>
<dbReference type="PANTHER" id="PTHR24373">
    <property type="entry name" value="SLIT RELATED LEUCINE-RICH REPEAT NEURONAL PROTEIN"/>
    <property type="match status" value="1"/>
</dbReference>
<dbReference type="Pfam" id="PF07679">
    <property type="entry name" value="I-set"/>
    <property type="match status" value="1"/>
</dbReference>
<dbReference type="Pfam" id="PF13855">
    <property type="entry name" value="LRR_8"/>
    <property type="match status" value="3"/>
</dbReference>
<dbReference type="Pfam" id="PF01463">
    <property type="entry name" value="LRRCT"/>
    <property type="match status" value="1"/>
</dbReference>
<dbReference type="SMART" id="SM00409">
    <property type="entry name" value="IG"/>
    <property type="match status" value="1"/>
</dbReference>
<dbReference type="SMART" id="SM00408">
    <property type="entry name" value="IGc2"/>
    <property type="match status" value="1"/>
</dbReference>
<dbReference type="SMART" id="SM00365">
    <property type="entry name" value="LRR_SD22"/>
    <property type="match status" value="4"/>
</dbReference>
<dbReference type="SMART" id="SM00369">
    <property type="entry name" value="LRR_TYP"/>
    <property type="match status" value="9"/>
</dbReference>
<dbReference type="SMART" id="SM00082">
    <property type="entry name" value="LRRCT"/>
    <property type="match status" value="1"/>
</dbReference>
<dbReference type="SUPFAM" id="SSF49265">
    <property type="entry name" value="Fibronectin type III"/>
    <property type="match status" value="1"/>
</dbReference>
<dbReference type="SUPFAM" id="SSF48726">
    <property type="entry name" value="Immunoglobulin"/>
    <property type="match status" value="1"/>
</dbReference>
<dbReference type="SUPFAM" id="SSF52058">
    <property type="entry name" value="L domain-like"/>
    <property type="match status" value="1"/>
</dbReference>
<dbReference type="PROSITE" id="PS50853">
    <property type="entry name" value="FN3"/>
    <property type="match status" value="1"/>
</dbReference>
<dbReference type="PROSITE" id="PS50835">
    <property type="entry name" value="IG_LIKE"/>
    <property type="match status" value="1"/>
</dbReference>
<dbReference type="PROSITE" id="PS51450">
    <property type="entry name" value="LRR"/>
    <property type="match status" value="9"/>
</dbReference>